<name>DEFB1_SHEEP</name>
<proteinExistence type="inferred from homology"/>
<keyword id="KW-0044">Antibiotic</keyword>
<keyword id="KW-0929">Antimicrobial</keyword>
<keyword id="KW-0211">Defensin</keyword>
<keyword id="KW-1015">Disulfide bond</keyword>
<keyword id="KW-0472">Membrane</keyword>
<keyword id="KW-1185">Reference proteome</keyword>
<keyword id="KW-0964">Secreted</keyword>
<keyword id="KW-0732">Signal</keyword>
<gene>
    <name type="primary">DEFB1</name>
</gene>
<sequence length="64" mass="7244">MRLHHLLLVLFFVVLSAGSGFTQGVRNRLSCHRNKGVCVPSRCPRHMRQIGTCRGPPVKCCRKK</sequence>
<feature type="signal peptide" evidence="1">
    <location>
        <begin position="1"/>
        <end position="22"/>
    </location>
</feature>
<feature type="peptide" id="PRO_0000006963" description="Beta-defensin 1">
    <location>
        <begin position="23"/>
        <end position="64"/>
    </location>
</feature>
<feature type="disulfide bond" evidence="1">
    <location>
        <begin position="31"/>
        <end position="60"/>
    </location>
</feature>
<feature type="disulfide bond" evidence="1">
    <location>
        <begin position="38"/>
        <end position="53"/>
    </location>
</feature>
<feature type="disulfide bond" evidence="1">
    <location>
        <begin position="43"/>
        <end position="61"/>
    </location>
</feature>
<dbReference type="EMBL" id="U75250">
    <property type="protein sequence ID" value="AAB61995.1"/>
    <property type="molecule type" value="Genomic_DNA"/>
</dbReference>
<dbReference type="SMR" id="O19038"/>
<dbReference type="STRING" id="9940.ENSOARP00000006815"/>
<dbReference type="PaxDb" id="9940-ENSOARP00000006815"/>
<dbReference type="eggNOG" id="ENOG502SYUI">
    <property type="taxonomic scope" value="Eukaryota"/>
</dbReference>
<dbReference type="HOGENOM" id="CLU_189296_4_1_1"/>
<dbReference type="OMA" id="PGTKCCR"/>
<dbReference type="OrthoDB" id="9714396at2759"/>
<dbReference type="Proteomes" id="UP000002356">
    <property type="component" value="Chromosome 26"/>
</dbReference>
<dbReference type="Bgee" id="ENSOARG00000006364">
    <property type="expression patterns" value="Expressed in rectum and 48 other cell types or tissues"/>
</dbReference>
<dbReference type="ExpressionAtlas" id="O19038">
    <property type="expression patterns" value="baseline"/>
</dbReference>
<dbReference type="GO" id="GO:0005615">
    <property type="term" value="C:extracellular space"/>
    <property type="evidence" value="ECO:0007669"/>
    <property type="project" value="TreeGrafter"/>
</dbReference>
<dbReference type="GO" id="GO:0016020">
    <property type="term" value="C:membrane"/>
    <property type="evidence" value="ECO:0000250"/>
    <property type="project" value="UniProtKB"/>
</dbReference>
<dbReference type="GO" id="GO:1990742">
    <property type="term" value="C:microvesicle"/>
    <property type="evidence" value="ECO:0000250"/>
    <property type="project" value="UniProtKB"/>
</dbReference>
<dbReference type="GO" id="GO:0097225">
    <property type="term" value="C:sperm midpiece"/>
    <property type="evidence" value="ECO:0000250"/>
    <property type="project" value="UniProtKB"/>
</dbReference>
<dbReference type="GO" id="GO:0031731">
    <property type="term" value="F:CCR6 chemokine receptor binding"/>
    <property type="evidence" value="ECO:0000250"/>
    <property type="project" value="UniProtKB"/>
</dbReference>
<dbReference type="GO" id="GO:0042056">
    <property type="term" value="F:chemoattractant activity"/>
    <property type="evidence" value="ECO:0007669"/>
    <property type="project" value="TreeGrafter"/>
</dbReference>
<dbReference type="GO" id="GO:0042802">
    <property type="term" value="F:identical protein binding"/>
    <property type="evidence" value="ECO:0000250"/>
    <property type="project" value="UniProtKB"/>
</dbReference>
<dbReference type="GO" id="GO:0019722">
    <property type="term" value="P:calcium-mediated signaling"/>
    <property type="evidence" value="ECO:0000250"/>
    <property type="project" value="UniProtKB"/>
</dbReference>
<dbReference type="GO" id="GO:0060326">
    <property type="term" value="P:cell chemotaxis"/>
    <property type="evidence" value="ECO:0007669"/>
    <property type="project" value="TreeGrafter"/>
</dbReference>
<dbReference type="GO" id="GO:0050829">
    <property type="term" value="P:defense response to Gram-negative bacterium"/>
    <property type="evidence" value="ECO:0000250"/>
    <property type="project" value="UniProtKB"/>
</dbReference>
<dbReference type="GO" id="GO:0050830">
    <property type="term" value="P:defense response to Gram-positive bacterium"/>
    <property type="evidence" value="ECO:0000250"/>
    <property type="project" value="UniProtKB"/>
</dbReference>
<dbReference type="GO" id="GO:0060474">
    <property type="term" value="P:positive regulation of flagellated sperm motility involved in capacitation"/>
    <property type="evidence" value="ECO:0000250"/>
    <property type="project" value="UniProtKB"/>
</dbReference>
<dbReference type="FunFam" id="3.10.360.10:FF:000001">
    <property type="entry name" value="Beta-defensin 1"/>
    <property type="match status" value="1"/>
</dbReference>
<dbReference type="Gene3D" id="3.10.360.10">
    <property type="entry name" value="Antimicrobial Peptide, Beta-defensin 2, Chain A"/>
    <property type="match status" value="1"/>
</dbReference>
<dbReference type="InterPro" id="IPR006080">
    <property type="entry name" value="Beta/alpha-defensin_C"/>
</dbReference>
<dbReference type="InterPro" id="IPR001855">
    <property type="entry name" value="Defensin_beta-like"/>
</dbReference>
<dbReference type="PANTHER" id="PTHR20515">
    <property type="entry name" value="BETA-DEFENSIN"/>
    <property type="match status" value="1"/>
</dbReference>
<dbReference type="PANTHER" id="PTHR20515:SF2">
    <property type="entry name" value="DEFENSIN BETA 4A"/>
    <property type="match status" value="1"/>
</dbReference>
<dbReference type="Pfam" id="PF00711">
    <property type="entry name" value="Defensin_beta"/>
    <property type="match status" value="1"/>
</dbReference>
<dbReference type="SMART" id="SM00048">
    <property type="entry name" value="DEFSN"/>
    <property type="match status" value="1"/>
</dbReference>
<dbReference type="SUPFAM" id="SSF57392">
    <property type="entry name" value="Defensin-like"/>
    <property type="match status" value="1"/>
</dbReference>
<evidence type="ECO:0000250" key="1"/>
<evidence type="ECO:0000250" key="2">
    <source>
        <dbReference type="UniProtKB" id="P60022"/>
    </source>
</evidence>
<evidence type="ECO:0000305" key="3"/>
<organism>
    <name type="scientific">Ovis aries</name>
    <name type="common">Sheep</name>
    <dbReference type="NCBI Taxonomy" id="9940"/>
    <lineage>
        <taxon>Eukaryota</taxon>
        <taxon>Metazoa</taxon>
        <taxon>Chordata</taxon>
        <taxon>Craniata</taxon>
        <taxon>Vertebrata</taxon>
        <taxon>Euteleostomi</taxon>
        <taxon>Mammalia</taxon>
        <taxon>Eutheria</taxon>
        <taxon>Laurasiatheria</taxon>
        <taxon>Artiodactyla</taxon>
        <taxon>Ruminantia</taxon>
        <taxon>Pecora</taxon>
        <taxon>Bovidae</taxon>
        <taxon>Caprinae</taxon>
        <taxon>Ovis</taxon>
    </lineage>
</organism>
<accession>O19038</accession>
<protein>
    <recommendedName>
        <fullName>Beta-defensin 1</fullName>
        <shortName>BD-1</shortName>
    </recommendedName>
    <alternativeName>
        <fullName>sBD1</fullName>
    </alternativeName>
</protein>
<comment type="function">
    <text evidence="2">Has bactericidal activity. May act as a ligand for C-C chemokine receptor CCR6. Positively regulates the sperm motility and bactericidal activity in a CCR6-dependent manner. Binds to CCR6 and triggers Ca2+ mobilization in the sperm which is important for its motility.</text>
</comment>
<comment type="subunit">
    <text evidence="2">Monomer. Homodimer.</text>
</comment>
<comment type="subcellular location">
    <subcellularLocation>
        <location evidence="2">Secreted</location>
    </subcellularLocation>
    <subcellularLocation>
        <location evidence="2">Membrane</location>
    </subcellularLocation>
    <text evidence="2">Associates with tumor cell membrane-derived microvesicles.</text>
</comment>
<comment type="similarity">
    <text evidence="3">Belongs to the beta-defensin family.</text>
</comment>
<reference key="1">
    <citation type="journal article" date="1998" name="J. Nutr.">
        <title>Antimicrobial peptide expression is developmentally regulated in the ovine gastrointestinal tract.</title>
        <authorList>
            <person name="Huttner K.M."/>
            <person name="Brezinski-Caliguri D.J."/>
            <person name="Mahoney M.M."/>
            <person name="Diamond G."/>
        </authorList>
    </citation>
    <scope>NUCLEOTIDE SEQUENCE [GENOMIC DNA]</scope>
</reference>
<reference key="2">
    <citation type="journal article" date="1998" name="Gene">
        <title>Localization and genomic organization of sheep antimicrobial peptides genes.</title>
        <authorList>
            <person name="Huttner K.M."/>
            <person name="Lambeth M.R."/>
            <person name="Burkin H.R."/>
            <person name="Broad T.E."/>
        </authorList>
    </citation>
    <scope>NUCLEOTIDE SEQUENCE [GENOMIC DNA]</scope>
    <source>
        <tissue>Trachea</tissue>
    </source>
</reference>